<organism>
    <name type="scientific">Cereibacter sphaeroides (strain ATCC 17025 / ATH 2.4.3)</name>
    <name type="common">Rhodobacter sphaeroides</name>
    <dbReference type="NCBI Taxonomy" id="349102"/>
    <lineage>
        <taxon>Bacteria</taxon>
        <taxon>Pseudomonadati</taxon>
        <taxon>Pseudomonadota</taxon>
        <taxon>Alphaproteobacteria</taxon>
        <taxon>Rhodobacterales</taxon>
        <taxon>Paracoccaceae</taxon>
        <taxon>Cereibacter</taxon>
    </lineage>
</organism>
<proteinExistence type="inferred from homology"/>
<reference key="1">
    <citation type="submission" date="2007-04" db="EMBL/GenBank/DDBJ databases">
        <title>Complete sequence of chromosome of Rhodobacter sphaeroides ATCC 17025.</title>
        <authorList>
            <consortium name="US DOE Joint Genome Institute"/>
            <person name="Copeland A."/>
            <person name="Lucas S."/>
            <person name="Lapidus A."/>
            <person name="Barry K."/>
            <person name="Detter J.C."/>
            <person name="Glavina del Rio T."/>
            <person name="Hammon N."/>
            <person name="Israni S."/>
            <person name="Dalin E."/>
            <person name="Tice H."/>
            <person name="Pitluck S."/>
            <person name="Chertkov O."/>
            <person name="Brettin T."/>
            <person name="Bruce D."/>
            <person name="Han C."/>
            <person name="Schmutz J."/>
            <person name="Larimer F."/>
            <person name="Land M."/>
            <person name="Hauser L."/>
            <person name="Kyrpides N."/>
            <person name="Kim E."/>
            <person name="Richardson P."/>
            <person name="Mackenzie C."/>
            <person name="Choudhary M."/>
            <person name="Donohue T.J."/>
            <person name="Kaplan S."/>
        </authorList>
    </citation>
    <scope>NUCLEOTIDE SEQUENCE [LARGE SCALE GENOMIC DNA]</scope>
    <source>
        <strain>ATCC 17025 / ATH 2.4.3</strain>
    </source>
</reference>
<dbReference type="EC" id="7.1.1.-" evidence="1"/>
<dbReference type="EMBL" id="CP000661">
    <property type="protein sequence ID" value="ABP70895.1"/>
    <property type="molecule type" value="Genomic_DNA"/>
</dbReference>
<dbReference type="SMR" id="A4WU31"/>
<dbReference type="STRING" id="349102.Rsph17025_2004"/>
<dbReference type="KEGG" id="rsq:Rsph17025_2004"/>
<dbReference type="eggNOG" id="COG0649">
    <property type="taxonomic scope" value="Bacteria"/>
</dbReference>
<dbReference type="HOGENOM" id="CLU_015134_1_1_5"/>
<dbReference type="GO" id="GO:0005886">
    <property type="term" value="C:plasma membrane"/>
    <property type="evidence" value="ECO:0007669"/>
    <property type="project" value="UniProtKB-SubCell"/>
</dbReference>
<dbReference type="GO" id="GO:0051287">
    <property type="term" value="F:NAD binding"/>
    <property type="evidence" value="ECO:0007669"/>
    <property type="project" value="InterPro"/>
</dbReference>
<dbReference type="GO" id="GO:0050136">
    <property type="term" value="F:NADH:ubiquinone reductase (non-electrogenic) activity"/>
    <property type="evidence" value="ECO:0007669"/>
    <property type="project" value="UniProtKB-UniRule"/>
</dbReference>
<dbReference type="GO" id="GO:0048038">
    <property type="term" value="F:quinone binding"/>
    <property type="evidence" value="ECO:0007669"/>
    <property type="project" value="UniProtKB-KW"/>
</dbReference>
<dbReference type="FunFam" id="1.10.645.10:FF:000005">
    <property type="entry name" value="NADH-quinone oxidoreductase subunit D"/>
    <property type="match status" value="1"/>
</dbReference>
<dbReference type="Gene3D" id="1.10.645.10">
    <property type="entry name" value="Cytochrome-c3 Hydrogenase, chain B"/>
    <property type="match status" value="1"/>
</dbReference>
<dbReference type="HAMAP" id="MF_01358">
    <property type="entry name" value="NDH1_NuoD"/>
    <property type="match status" value="1"/>
</dbReference>
<dbReference type="InterPro" id="IPR001135">
    <property type="entry name" value="NADH_Q_OxRdtase_suD"/>
</dbReference>
<dbReference type="InterPro" id="IPR014029">
    <property type="entry name" value="NADH_UbQ_OxRdtase_49kDa_CS"/>
</dbReference>
<dbReference type="InterPro" id="IPR022885">
    <property type="entry name" value="NDH1_su_D/H"/>
</dbReference>
<dbReference type="InterPro" id="IPR029014">
    <property type="entry name" value="NiFe-Hase_large"/>
</dbReference>
<dbReference type="NCBIfam" id="TIGR01962">
    <property type="entry name" value="NuoD"/>
    <property type="match status" value="1"/>
</dbReference>
<dbReference type="NCBIfam" id="NF004739">
    <property type="entry name" value="PRK06075.1"/>
    <property type="match status" value="1"/>
</dbReference>
<dbReference type="PANTHER" id="PTHR11993:SF10">
    <property type="entry name" value="NADH DEHYDROGENASE [UBIQUINONE] IRON-SULFUR PROTEIN 2, MITOCHONDRIAL"/>
    <property type="match status" value="1"/>
</dbReference>
<dbReference type="PANTHER" id="PTHR11993">
    <property type="entry name" value="NADH-UBIQUINONE OXIDOREDUCTASE 49 KDA SUBUNIT"/>
    <property type="match status" value="1"/>
</dbReference>
<dbReference type="Pfam" id="PF00346">
    <property type="entry name" value="Complex1_49kDa"/>
    <property type="match status" value="1"/>
</dbReference>
<dbReference type="SUPFAM" id="SSF56762">
    <property type="entry name" value="HydB/Nqo4-like"/>
    <property type="match status" value="1"/>
</dbReference>
<dbReference type="PROSITE" id="PS00535">
    <property type="entry name" value="COMPLEX1_49K"/>
    <property type="match status" value="1"/>
</dbReference>
<keyword id="KW-0997">Cell inner membrane</keyword>
<keyword id="KW-1003">Cell membrane</keyword>
<keyword id="KW-0472">Membrane</keyword>
<keyword id="KW-0520">NAD</keyword>
<keyword id="KW-0874">Quinone</keyword>
<keyword id="KW-1278">Translocase</keyword>
<keyword id="KW-0813">Transport</keyword>
<keyword id="KW-0830">Ubiquinone</keyword>
<accession>A4WU31</accession>
<evidence type="ECO:0000255" key="1">
    <source>
        <dbReference type="HAMAP-Rule" id="MF_01358"/>
    </source>
</evidence>
<name>NUOD_CERS5</name>
<sequence>MDTKFDDVLTGEQKLRNFNINFGPQHPAAHGVLRLVLELDGEVVERCDPHIGLLHRGTEKLMETRTYLQNLPYFDRLDYVAPMNQEHAWCLAIERLTGVQVPRRASLIRVLYSEIGRVLNHLLNVTTQAMDVGALTPPLWGFEEREKLMVFYERASGARLHAAYFRPGGVHQDLTPRLIEDIEEWAEHFPKVLDDLDGLLTENRIFKQRNVDIGVVTEKDILDWGFSGVMVRGSGLAWDLRRSQPYECYDEFDFQIPVGKNGDCYDRYLCRMEEMRQSTRIIQQCLAKLRVEKGDVLARGKITPPPRAEMKTSMEALIHHFKLYTEGFHVPAGEVYAAVEAPKGEFGVYLVADGTNRPYRAKIRAPGFLHLQAIDYIAKGHLLADVSAIIGTLDVVFGEIDR</sequence>
<gene>
    <name evidence="1" type="primary">nuoD</name>
    <name type="ordered locus">Rsph17025_2004</name>
</gene>
<feature type="chain" id="PRO_0000357899" description="NADH-quinone oxidoreductase subunit D">
    <location>
        <begin position="1"/>
        <end position="402"/>
    </location>
</feature>
<protein>
    <recommendedName>
        <fullName evidence="1">NADH-quinone oxidoreductase subunit D</fullName>
        <ecNumber evidence="1">7.1.1.-</ecNumber>
    </recommendedName>
    <alternativeName>
        <fullName evidence="1">NADH dehydrogenase I subunit D</fullName>
    </alternativeName>
    <alternativeName>
        <fullName evidence="1">NDH-1 subunit D</fullName>
    </alternativeName>
</protein>
<comment type="function">
    <text evidence="1">NDH-1 shuttles electrons from NADH, via FMN and iron-sulfur (Fe-S) centers, to quinones in the respiratory chain. The immediate electron acceptor for the enzyme in this species is believed to be ubiquinone. Couples the redox reaction to proton translocation (for every two electrons transferred, four hydrogen ions are translocated across the cytoplasmic membrane), and thus conserves the redox energy in a proton gradient.</text>
</comment>
<comment type="catalytic activity">
    <reaction evidence="1">
        <text>a quinone + NADH + 5 H(+)(in) = a quinol + NAD(+) + 4 H(+)(out)</text>
        <dbReference type="Rhea" id="RHEA:57888"/>
        <dbReference type="ChEBI" id="CHEBI:15378"/>
        <dbReference type="ChEBI" id="CHEBI:24646"/>
        <dbReference type="ChEBI" id="CHEBI:57540"/>
        <dbReference type="ChEBI" id="CHEBI:57945"/>
        <dbReference type="ChEBI" id="CHEBI:132124"/>
    </reaction>
</comment>
<comment type="subunit">
    <text evidence="1">NDH-1 is composed of 14 different subunits. Subunits NuoB, C, D, E, F, and G constitute the peripheral sector of the complex.</text>
</comment>
<comment type="subcellular location">
    <subcellularLocation>
        <location evidence="1">Cell inner membrane</location>
        <topology evidence="1">Peripheral membrane protein</topology>
        <orientation evidence="1">Cytoplasmic side</orientation>
    </subcellularLocation>
</comment>
<comment type="similarity">
    <text evidence="1">Belongs to the complex I 49 kDa subunit family.</text>
</comment>